<gene>
    <name type="primary">CYP52E2</name>
</gene>
<name>CP52W_CANAP</name>
<dbReference type="EC" id="1.14.14.-"/>
<dbReference type="EMBL" id="X87640">
    <property type="protein sequence ID" value="CAA60980.1"/>
    <property type="molecule type" value="Genomic_DNA"/>
</dbReference>
<dbReference type="PIR" id="S69989">
    <property type="entry name" value="S69989"/>
</dbReference>
<dbReference type="SMR" id="Q12573"/>
<dbReference type="GO" id="GO:0016020">
    <property type="term" value="C:membrane"/>
    <property type="evidence" value="ECO:0007669"/>
    <property type="project" value="UniProtKB-SubCell"/>
</dbReference>
<dbReference type="GO" id="GO:0020037">
    <property type="term" value="F:heme binding"/>
    <property type="evidence" value="ECO:0007669"/>
    <property type="project" value="InterPro"/>
</dbReference>
<dbReference type="GO" id="GO:0005506">
    <property type="term" value="F:iron ion binding"/>
    <property type="evidence" value="ECO:0007669"/>
    <property type="project" value="InterPro"/>
</dbReference>
<dbReference type="GO" id="GO:0016712">
    <property type="term" value="F:oxidoreductase activity, acting on paired donors, with incorporation or reduction of molecular oxygen, reduced flavin or flavoprotein as one donor, and incorporation of one atom of oxygen"/>
    <property type="evidence" value="ECO:0007669"/>
    <property type="project" value="InterPro"/>
</dbReference>
<dbReference type="CDD" id="cd11063">
    <property type="entry name" value="CYP52"/>
    <property type="match status" value="1"/>
</dbReference>
<dbReference type="Gene3D" id="1.10.630.10">
    <property type="entry name" value="Cytochrome P450"/>
    <property type="match status" value="1"/>
</dbReference>
<dbReference type="InterPro" id="IPR001128">
    <property type="entry name" value="Cyt_P450"/>
</dbReference>
<dbReference type="InterPro" id="IPR017972">
    <property type="entry name" value="Cyt_P450_CS"/>
</dbReference>
<dbReference type="InterPro" id="IPR002974">
    <property type="entry name" value="Cyt_P450_E_CYP52_ascomycetes"/>
</dbReference>
<dbReference type="InterPro" id="IPR047146">
    <property type="entry name" value="Cyt_P450_E_CYP52_fungi"/>
</dbReference>
<dbReference type="InterPro" id="IPR002402">
    <property type="entry name" value="Cyt_P450_E_grp-II"/>
</dbReference>
<dbReference type="InterPro" id="IPR036396">
    <property type="entry name" value="Cyt_P450_sf"/>
</dbReference>
<dbReference type="PANTHER" id="PTHR24287">
    <property type="entry name" value="P450, PUTATIVE (EUROFUNG)-RELATED"/>
    <property type="match status" value="1"/>
</dbReference>
<dbReference type="PANTHER" id="PTHR24287:SF1">
    <property type="entry name" value="P450, PUTATIVE (EUROFUNG)-RELATED"/>
    <property type="match status" value="1"/>
</dbReference>
<dbReference type="Pfam" id="PF00067">
    <property type="entry name" value="p450"/>
    <property type="match status" value="1"/>
</dbReference>
<dbReference type="PRINTS" id="PR00464">
    <property type="entry name" value="EP450II"/>
</dbReference>
<dbReference type="PRINTS" id="PR01239">
    <property type="entry name" value="EP450IICYP52"/>
</dbReference>
<dbReference type="PRINTS" id="PR00385">
    <property type="entry name" value="P450"/>
</dbReference>
<dbReference type="SUPFAM" id="SSF48264">
    <property type="entry name" value="Cytochrome P450"/>
    <property type="match status" value="1"/>
</dbReference>
<dbReference type="PROSITE" id="PS00086">
    <property type="entry name" value="CYTOCHROME_P450"/>
    <property type="match status" value="1"/>
</dbReference>
<keyword id="KW-0349">Heme</keyword>
<keyword id="KW-0408">Iron</keyword>
<keyword id="KW-0472">Membrane</keyword>
<keyword id="KW-0479">Metal-binding</keyword>
<keyword id="KW-0503">Monooxygenase</keyword>
<keyword id="KW-0560">Oxidoreductase</keyword>
<keyword id="KW-0812">Transmembrane</keyword>
<keyword id="KW-1133">Transmembrane helix</keyword>
<comment type="function">
    <text>Together with an NADPH cytochrome P450 the enzyme system catalyzes the terminal hydroxylation as the first step in the assimilation of alkanes and fatty acids.</text>
</comment>
<comment type="cofactor">
    <cofactor evidence="1">
        <name>heme</name>
        <dbReference type="ChEBI" id="CHEBI:30413"/>
    </cofactor>
</comment>
<comment type="subcellular location">
    <subcellularLocation>
        <location evidence="3">Membrane</location>
    </subcellularLocation>
    <subcellularLocation>
        <location>Membrane</location>
        <topology>Multi-pass membrane protein</topology>
    </subcellularLocation>
</comment>
<comment type="similarity">
    <text evidence="3">Belongs to the cytochrome P450 family.</text>
</comment>
<proteinExistence type="inferred from homology"/>
<organism>
    <name type="scientific">Candida apicola</name>
    <name type="common">Yeast</name>
    <dbReference type="NCBI Taxonomy" id="29830"/>
    <lineage>
        <taxon>Eukaryota</taxon>
        <taxon>Fungi</taxon>
        <taxon>Dikarya</taxon>
        <taxon>Ascomycota</taxon>
        <taxon>Saccharomycotina</taxon>
        <taxon>Dipodascomycetes</taxon>
        <taxon>Dipodascales</taxon>
        <taxon>Trichomonascaceae</taxon>
        <taxon>Starmerella</taxon>
    </lineage>
</organism>
<accession>Q12573</accession>
<evidence type="ECO:0000250" key="1"/>
<evidence type="ECO:0000255" key="2"/>
<evidence type="ECO:0000305" key="3"/>
<feature type="chain" id="PRO_0000052037" description="Cytochrome P450 52E2">
    <location>
        <begin position="1"/>
        <end position="519"/>
    </location>
</feature>
<feature type="transmembrane region" description="Helical" evidence="2">
    <location>
        <begin position="10"/>
        <end position="30"/>
    </location>
</feature>
<feature type="transmembrane region" description="Helical" evidence="2">
    <location>
        <begin position="44"/>
        <end position="64"/>
    </location>
</feature>
<feature type="binding site" description="axial binding residue" evidence="1">
    <location>
        <position position="461"/>
    </location>
    <ligand>
        <name>heme</name>
        <dbReference type="ChEBI" id="CHEBI:30413"/>
    </ligand>
    <ligandPart>
        <name>Fe</name>
        <dbReference type="ChEBI" id="CHEBI:18248"/>
    </ligandPart>
</feature>
<reference key="1">
    <citation type="journal article" date="1996" name="Yeast">
        <title>Cytochromes P450 of the sophorose lipid-producing yeast Candida apicola: heterogeneity and polymerase chain reaction-mediated cloning of two genes.</title>
        <authorList>
            <person name="Lottermoser K."/>
            <person name="Schunck W.H."/>
            <person name="Asperger O."/>
        </authorList>
    </citation>
    <scope>NUCLEOTIDE SEQUENCE [GENOMIC DNA]</scope>
    <source>
        <strain>IMET 43747</strain>
    </source>
</reference>
<sequence>MNINFSDALMLGGISLSFLLASQAIYFYFIYSPRAKKLGCAPPPIFFSFPLGIPDLIRLVNAWFHDDLLEWFTHRFEEFGRRTAFQSVAGQLWIGTIEPENIKTMLATSFKDYSLGFRYNAMYGLLGNGIFTLSGDGWKNSRALLRPQFSREQVSHLESMRTHINMMINNHFKGGQVVDAQVLYHNLTIDTATEFLFGESTNTLDPALAQQGLPGPKGLVTGEQFAEAFTSALELLSVRVMAGAAWFLVWTPKFWRSCKVCHNFIDYFVYKALATPMEKGQDADRYVFIRELTKETSDPRVIRDQALNILLAGRDTTAALLSFTTYYLGAYPEVYDELREAVIADFGSADAEPPTFEQLKQCKVLQNVIREVLRLHPNVPLNFREAIADTTFPTGGGPNGDQPIFVPKGQKVFYATYVMQRNAGIWGPDSTSFRPDRWNEPREALASGWDYIPFNGGPRICLGQQFALTEASYTLVRICQEFSRIEVLHPDVITARNVMKQRMRLPNSSSGGVITRFIR</sequence>
<protein>
    <recommendedName>
        <fullName>Cytochrome P450 52E2</fullName>
        <ecNumber>1.14.14.-</ecNumber>
    </recommendedName>
    <alternativeName>
        <fullName>CYPLIIE2</fullName>
    </alternativeName>
</protein>